<protein>
    <recommendedName>
        <fullName evidence="1">3-isopropylmalate dehydratase large subunit</fullName>
        <ecNumber evidence="1">4.2.1.33</ecNumber>
    </recommendedName>
    <alternativeName>
        <fullName evidence="1">Alpha-IPM isomerase</fullName>
        <shortName evidence="1">IPMI</shortName>
    </alternativeName>
    <alternativeName>
        <fullName evidence="1">Isopropylmalate isomerase</fullName>
    </alternativeName>
</protein>
<dbReference type="EC" id="4.2.1.33" evidence="1"/>
<dbReference type="EMBL" id="CP000473">
    <property type="protein sequence ID" value="ABJ85034.1"/>
    <property type="molecule type" value="Genomic_DNA"/>
</dbReference>
<dbReference type="SMR" id="Q01Z81"/>
<dbReference type="FunCoup" id="Q01Z81">
    <property type="interactions" value="564"/>
</dbReference>
<dbReference type="STRING" id="234267.Acid_4069"/>
<dbReference type="KEGG" id="sus:Acid_4069"/>
<dbReference type="eggNOG" id="COG0065">
    <property type="taxonomic scope" value="Bacteria"/>
</dbReference>
<dbReference type="HOGENOM" id="CLU_006714_3_4_0"/>
<dbReference type="InParanoid" id="Q01Z81"/>
<dbReference type="OrthoDB" id="9802769at2"/>
<dbReference type="UniPathway" id="UPA00048">
    <property type="reaction ID" value="UER00071"/>
</dbReference>
<dbReference type="GO" id="GO:0003861">
    <property type="term" value="F:3-isopropylmalate dehydratase activity"/>
    <property type="evidence" value="ECO:0007669"/>
    <property type="project" value="UniProtKB-UniRule"/>
</dbReference>
<dbReference type="GO" id="GO:0051539">
    <property type="term" value="F:4 iron, 4 sulfur cluster binding"/>
    <property type="evidence" value="ECO:0007669"/>
    <property type="project" value="UniProtKB-KW"/>
</dbReference>
<dbReference type="GO" id="GO:0046872">
    <property type="term" value="F:metal ion binding"/>
    <property type="evidence" value="ECO:0007669"/>
    <property type="project" value="UniProtKB-KW"/>
</dbReference>
<dbReference type="GO" id="GO:0009098">
    <property type="term" value="P:L-leucine biosynthetic process"/>
    <property type="evidence" value="ECO:0007669"/>
    <property type="project" value="UniProtKB-UniRule"/>
</dbReference>
<dbReference type="CDD" id="cd01583">
    <property type="entry name" value="IPMI"/>
    <property type="match status" value="1"/>
</dbReference>
<dbReference type="Gene3D" id="3.30.499.10">
    <property type="entry name" value="Aconitase, domain 3"/>
    <property type="match status" value="2"/>
</dbReference>
<dbReference type="HAMAP" id="MF_01026">
    <property type="entry name" value="LeuC_type1"/>
    <property type="match status" value="1"/>
</dbReference>
<dbReference type="InterPro" id="IPR004430">
    <property type="entry name" value="3-IsopropMal_deHydase_lsu"/>
</dbReference>
<dbReference type="InterPro" id="IPR015931">
    <property type="entry name" value="Acnase/IPM_dHydase_lsu_aba_1/3"/>
</dbReference>
<dbReference type="InterPro" id="IPR001030">
    <property type="entry name" value="Acoase/IPM_deHydtase_lsu_aba"/>
</dbReference>
<dbReference type="InterPro" id="IPR018136">
    <property type="entry name" value="Aconitase_4Fe-4S_BS"/>
</dbReference>
<dbReference type="InterPro" id="IPR036008">
    <property type="entry name" value="Aconitase_4Fe-4S_dom"/>
</dbReference>
<dbReference type="InterPro" id="IPR050067">
    <property type="entry name" value="IPM_dehydratase_rel_enz"/>
</dbReference>
<dbReference type="InterPro" id="IPR033941">
    <property type="entry name" value="IPMI_cat"/>
</dbReference>
<dbReference type="NCBIfam" id="TIGR00170">
    <property type="entry name" value="leuC"/>
    <property type="match status" value="1"/>
</dbReference>
<dbReference type="NCBIfam" id="NF004016">
    <property type="entry name" value="PRK05478.1"/>
    <property type="match status" value="1"/>
</dbReference>
<dbReference type="NCBIfam" id="NF009116">
    <property type="entry name" value="PRK12466.1"/>
    <property type="match status" value="1"/>
</dbReference>
<dbReference type="PANTHER" id="PTHR43822:SF9">
    <property type="entry name" value="3-ISOPROPYLMALATE DEHYDRATASE"/>
    <property type="match status" value="1"/>
</dbReference>
<dbReference type="PANTHER" id="PTHR43822">
    <property type="entry name" value="HOMOACONITASE, MITOCHONDRIAL-RELATED"/>
    <property type="match status" value="1"/>
</dbReference>
<dbReference type="Pfam" id="PF00330">
    <property type="entry name" value="Aconitase"/>
    <property type="match status" value="1"/>
</dbReference>
<dbReference type="PRINTS" id="PR00415">
    <property type="entry name" value="ACONITASE"/>
</dbReference>
<dbReference type="SUPFAM" id="SSF53732">
    <property type="entry name" value="Aconitase iron-sulfur domain"/>
    <property type="match status" value="1"/>
</dbReference>
<dbReference type="PROSITE" id="PS00450">
    <property type="entry name" value="ACONITASE_1"/>
    <property type="match status" value="1"/>
</dbReference>
<gene>
    <name evidence="1" type="primary">leuC</name>
    <name type="ordered locus">Acid_4069</name>
</gene>
<proteinExistence type="inferred from homology"/>
<feature type="chain" id="PRO_0000319841" description="3-isopropylmalate dehydratase large subunit">
    <location>
        <begin position="1"/>
        <end position="466"/>
    </location>
</feature>
<feature type="binding site" evidence="1">
    <location>
        <position position="347"/>
    </location>
    <ligand>
        <name>[4Fe-4S] cluster</name>
        <dbReference type="ChEBI" id="CHEBI:49883"/>
    </ligand>
</feature>
<feature type="binding site" evidence="1">
    <location>
        <position position="407"/>
    </location>
    <ligand>
        <name>[4Fe-4S] cluster</name>
        <dbReference type="ChEBI" id="CHEBI:49883"/>
    </ligand>
</feature>
<feature type="binding site" evidence="1">
    <location>
        <position position="410"/>
    </location>
    <ligand>
        <name>[4Fe-4S] cluster</name>
        <dbReference type="ChEBI" id="CHEBI:49883"/>
    </ligand>
</feature>
<organism>
    <name type="scientific">Solibacter usitatus (strain Ellin6076)</name>
    <dbReference type="NCBI Taxonomy" id="234267"/>
    <lineage>
        <taxon>Bacteria</taxon>
        <taxon>Pseudomonadati</taxon>
        <taxon>Acidobacteriota</taxon>
        <taxon>Terriglobia</taxon>
        <taxon>Bryobacterales</taxon>
        <taxon>Solibacteraceae</taxon>
        <taxon>Candidatus Solibacter</taxon>
    </lineage>
</organism>
<accession>Q01Z81</accession>
<keyword id="KW-0004">4Fe-4S</keyword>
<keyword id="KW-0028">Amino-acid biosynthesis</keyword>
<keyword id="KW-0100">Branched-chain amino acid biosynthesis</keyword>
<keyword id="KW-0408">Iron</keyword>
<keyword id="KW-0411">Iron-sulfur</keyword>
<keyword id="KW-0432">Leucine biosynthesis</keyword>
<keyword id="KW-0456">Lyase</keyword>
<keyword id="KW-0479">Metal-binding</keyword>
<name>LEUC_SOLUE</name>
<evidence type="ECO:0000255" key="1">
    <source>
        <dbReference type="HAMAP-Rule" id="MF_01026"/>
    </source>
</evidence>
<reference key="1">
    <citation type="journal article" date="2009" name="Appl. Environ. Microbiol.">
        <title>Three genomes from the phylum Acidobacteria provide insight into the lifestyles of these microorganisms in soils.</title>
        <authorList>
            <person name="Ward N.L."/>
            <person name="Challacombe J.F."/>
            <person name="Janssen P.H."/>
            <person name="Henrissat B."/>
            <person name="Coutinho P.M."/>
            <person name="Wu M."/>
            <person name="Xie G."/>
            <person name="Haft D.H."/>
            <person name="Sait M."/>
            <person name="Badger J."/>
            <person name="Barabote R.D."/>
            <person name="Bradley B."/>
            <person name="Brettin T.S."/>
            <person name="Brinkac L.M."/>
            <person name="Bruce D."/>
            <person name="Creasy T."/>
            <person name="Daugherty S.C."/>
            <person name="Davidsen T.M."/>
            <person name="DeBoy R.T."/>
            <person name="Detter J.C."/>
            <person name="Dodson R.J."/>
            <person name="Durkin A.S."/>
            <person name="Ganapathy A."/>
            <person name="Gwinn-Giglio M."/>
            <person name="Han C.S."/>
            <person name="Khouri H."/>
            <person name="Kiss H."/>
            <person name="Kothari S.P."/>
            <person name="Madupu R."/>
            <person name="Nelson K.E."/>
            <person name="Nelson W.C."/>
            <person name="Paulsen I."/>
            <person name="Penn K."/>
            <person name="Ren Q."/>
            <person name="Rosovitz M.J."/>
            <person name="Selengut J.D."/>
            <person name="Shrivastava S."/>
            <person name="Sullivan S.A."/>
            <person name="Tapia R."/>
            <person name="Thompson L.S."/>
            <person name="Watkins K.L."/>
            <person name="Yang Q."/>
            <person name="Yu C."/>
            <person name="Zafar N."/>
            <person name="Zhou L."/>
            <person name="Kuske C.R."/>
        </authorList>
    </citation>
    <scope>NUCLEOTIDE SEQUENCE [LARGE SCALE GENOMIC DNA]</scope>
    <source>
        <strain>Ellin6076</strain>
    </source>
</reference>
<comment type="function">
    <text evidence="1">Catalyzes the isomerization between 2-isopropylmalate and 3-isopropylmalate, via the formation of 2-isopropylmaleate.</text>
</comment>
<comment type="catalytic activity">
    <reaction evidence="1">
        <text>(2R,3S)-3-isopropylmalate = (2S)-2-isopropylmalate</text>
        <dbReference type="Rhea" id="RHEA:32287"/>
        <dbReference type="ChEBI" id="CHEBI:1178"/>
        <dbReference type="ChEBI" id="CHEBI:35121"/>
        <dbReference type="EC" id="4.2.1.33"/>
    </reaction>
</comment>
<comment type="cofactor">
    <cofactor evidence="1">
        <name>[4Fe-4S] cluster</name>
        <dbReference type="ChEBI" id="CHEBI:49883"/>
    </cofactor>
    <text evidence="1">Binds 1 [4Fe-4S] cluster per subunit.</text>
</comment>
<comment type="pathway">
    <text evidence="1">Amino-acid biosynthesis; L-leucine biosynthesis; L-leucine from 3-methyl-2-oxobutanoate: step 2/4.</text>
</comment>
<comment type="subunit">
    <text evidence="1">Heterodimer of LeuC and LeuD.</text>
</comment>
<comment type="similarity">
    <text evidence="1">Belongs to the aconitase/IPM isomerase family. LeuC type 1 subfamily.</text>
</comment>
<sequence>MPRTIIEKLWDSHVVHERPGAPTLLFIDLHLVHEVTSPQAFQGLRERGLKVRRPDLTIATADHSIPTTDRSLPIVDEIAAKQLAQLETNCKDFGIRCLGVHSSQQGIVHVIGPELGLTQPGMTVVCGDSHTATHGAFGALAFGIGTSEVEQVLASQCLLQRKSKTFQVKVDGALKAGVSAKDIILALIARIGIGGGTGSVFEYTGSAIRALSVEERMTVCNMSIEGGARAGLIAPDDATFEYLAGRPHAPKGAAWDAAIPRWKQLPTDDGATYDRSVSIDADTLEPMITYGTNPGMGVSINAALPDPSQVSDPMARDSITKALAYMGLEGGKPLVGHPIDVVFIGSCTNSRISDLRTAAGLLKGRKVSPKVRVMVVPGSQEVKRQAIAEGLPEIFRAAGCDYREPGCSMCIAMNGDQLAPGEYSVSTSNRNFEGRQGKGGRTFLASPLTAAASAITGVVTDVRTLL</sequence>